<protein>
    <recommendedName>
        <fullName evidence="3">Brevinin-2Rk</fullName>
    </recommendedName>
</protein>
<proteinExistence type="evidence at protein level"/>
<feature type="peptide" id="PRO_0000442764" description="Brevinin-2Rk" evidence="2">
    <location>
        <begin position="1"/>
        <end position="33"/>
    </location>
</feature>
<feature type="disulfide bond" evidence="2">
    <location>
        <begin position="27"/>
        <end position="33"/>
    </location>
</feature>
<reference evidence="4" key="1">
    <citation type="journal article" date="2017" name="Anal. Bioanal. Chem.">
        <title>Differentiation of frogs from two populations belonging to the Pelophylax esculentus complex by LC-MS/MS comparison of their skin peptidomes.</title>
        <authorList>
            <person name="Samgina T.Y."/>
            <person name="Artemenko K.A."/>
            <person name="Bergquist J."/>
            <person name="Trebse P."/>
            <person name="Torkar G."/>
            <person name="Tolpina M.D."/>
            <person name="Lebedev A.T."/>
        </authorList>
    </citation>
    <scope>PROTEIN SEQUENCE</scope>
    <scope>SUBCELLULAR LOCATION</scope>
    <scope>MASS SPECTROMETRY</scope>
    <scope>IDENTIFICATION BY MASS SPECTROMETRY</scope>
    <source>
        <tissue evidence="3">Skin secretion</tissue>
    </source>
</reference>
<sequence length="33" mass="3509">GLWKTLKDSAKSAVTNVAVTMLDKLRCKLTGGC</sequence>
<accession>C0HL04</accession>
<organism>
    <name type="scientific">Pelophylax ridibundus</name>
    <name type="common">Marsh frog</name>
    <name type="synonym">Rana ridibunda</name>
    <dbReference type="NCBI Taxonomy" id="8406"/>
    <lineage>
        <taxon>Eukaryota</taxon>
        <taxon>Metazoa</taxon>
        <taxon>Chordata</taxon>
        <taxon>Craniata</taxon>
        <taxon>Vertebrata</taxon>
        <taxon>Euteleostomi</taxon>
        <taxon>Amphibia</taxon>
        <taxon>Batrachia</taxon>
        <taxon>Anura</taxon>
        <taxon>Neobatrachia</taxon>
        <taxon>Ranoidea</taxon>
        <taxon>Ranidae</taxon>
        <taxon>Pelophylax</taxon>
    </lineage>
</organism>
<comment type="function">
    <text evidence="1">Antimicrobial peptide.</text>
</comment>
<comment type="subcellular location">
    <subcellularLocation>
        <location evidence="2">Secreted</location>
    </subcellularLocation>
</comment>
<comment type="tissue specificity">
    <text evidence="5">Expressed by the skin glands.</text>
</comment>
<comment type="mass spectrometry" mass="3504.9" method="Electrospray" evidence="2"/>
<comment type="similarity">
    <text evidence="4">Belongs to the frog skin active peptide (FSAP) family. Brevinin subfamily.</text>
</comment>
<keyword id="KW-0929">Antimicrobial</keyword>
<keyword id="KW-0903">Direct protein sequencing</keyword>
<keyword id="KW-1015">Disulfide bond</keyword>
<keyword id="KW-0964">Secreted</keyword>
<dbReference type="SMR" id="C0HL04"/>
<dbReference type="GO" id="GO:0005576">
    <property type="term" value="C:extracellular region"/>
    <property type="evidence" value="ECO:0000314"/>
    <property type="project" value="UniProtKB"/>
</dbReference>
<dbReference type="GO" id="GO:0006952">
    <property type="term" value="P:defense response"/>
    <property type="evidence" value="ECO:0007669"/>
    <property type="project" value="InterPro"/>
</dbReference>
<dbReference type="InterPro" id="IPR012521">
    <property type="entry name" value="Antimicrobial_frog_2"/>
</dbReference>
<dbReference type="Pfam" id="PF08023">
    <property type="entry name" value="Antimicrobial_2"/>
    <property type="match status" value="1"/>
</dbReference>
<name>BR2K_PELRI</name>
<evidence type="ECO:0000250" key="1">
    <source>
        <dbReference type="UniProtKB" id="P0C5X2"/>
    </source>
</evidence>
<evidence type="ECO:0000269" key="2">
    <source>
    </source>
</evidence>
<evidence type="ECO:0000303" key="3">
    <source>
    </source>
</evidence>
<evidence type="ECO:0000305" key="4"/>
<evidence type="ECO:0000305" key="5">
    <source>
    </source>
</evidence>